<gene>
    <name evidence="2" type="primary">tuf</name>
    <name type="ordered locus">P9215_17761</name>
</gene>
<proteinExistence type="inferred from homology"/>
<organism>
    <name type="scientific">Prochlorococcus marinus (strain MIT 9215)</name>
    <dbReference type="NCBI Taxonomy" id="93060"/>
    <lineage>
        <taxon>Bacteria</taxon>
        <taxon>Bacillati</taxon>
        <taxon>Cyanobacteriota</taxon>
        <taxon>Cyanophyceae</taxon>
        <taxon>Synechococcales</taxon>
        <taxon>Prochlorococcaceae</taxon>
        <taxon>Prochlorococcus</taxon>
    </lineage>
</organism>
<reference key="1">
    <citation type="journal article" date="2007" name="PLoS Genet.">
        <title>Patterns and implications of gene gain and loss in the evolution of Prochlorococcus.</title>
        <authorList>
            <person name="Kettler G.C."/>
            <person name="Martiny A.C."/>
            <person name="Huang K."/>
            <person name="Zucker J."/>
            <person name="Coleman M.L."/>
            <person name="Rodrigue S."/>
            <person name="Chen F."/>
            <person name="Lapidus A."/>
            <person name="Ferriera S."/>
            <person name="Johnson J."/>
            <person name="Steglich C."/>
            <person name="Church G.M."/>
            <person name="Richardson P."/>
            <person name="Chisholm S.W."/>
        </authorList>
    </citation>
    <scope>NUCLEOTIDE SEQUENCE [LARGE SCALE GENOMIC DNA]</scope>
    <source>
        <strain>MIT 9215</strain>
    </source>
</reference>
<keyword id="KW-0963">Cytoplasm</keyword>
<keyword id="KW-0251">Elongation factor</keyword>
<keyword id="KW-0342">GTP-binding</keyword>
<keyword id="KW-0378">Hydrolase</keyword>
<keyword id="KW-0460">Magnesium</keyword>
<keyword id="KW-0479">Metal-binding</keyword>
<keyword id="KW-0547">Nucleotide-binding</keyword>
<keyword id="KW-0648">Protein biosynthesis</keyword>
<protein>
    <recommendedName>
        <fullName evidence="2">Elongation factor Tu</fullName>
        <shortName evidence="2">EF-Tu</shortName>
        <ecNumber evidence="2">3.6.5.3</ecNumber>
    </recommendedName>
</protein>
<sequence>MAREKFERNKPHVNIGTIGHVDHGKTTLTAAITNVLAKKGQAQAQDYGDIDGAPEERERGITINTAHVEYETEGRHYAHVDCPGHADYVKNMITGAAQMDGAILVCAATDGPMAQTKEHILLAKQVGVPALVVALNKCDMVDDEEIIELVEMEIRELLDSYDFPGDDIPIVQVSGLKALEGDSTWESKIEELMKAVDASIPEPEREVDKPFLMAVEDVFSITGRGTVATGRIERGKVKVGEEVEIVGIRDTRLTTVTGVEMFRKLLDEGMAGDNVGLLLRGVQKEDIERGMVLVKKGSITPHTQFEGEVYVLKKEEGGRHTPFFAGYRPQFYIRTTDVTGQITAFTSDDGSNVEMVMPGDRIKMTGELICPVAIEQGMRFAIREGGRTIGAGVVSKIIK</sequence>
<name>EFTU_PROM2</name>
<dbReference type="EC" id="3.6.5.3" evidence="2"/>
<dbReference type="EMBL" id="CP000825">
    <property type="protein sequence ID" value="ABV51389.1"/>
    <property type="molecule type" value="Genomic_DNA"/>
</dbReference>
<dbReference type="RefSeq" id="WP_012008405.1">
    <property type="nucleotide sequence ID" value="NC_009840.1"/>
</dbReference>
<dbReference type="SMR" id="A8G708"/>
<dbReference type="STRING" id="93060.P9215_17761"/>
<dbReference type="KEGG" id="pmh:P9215_17761"/>
<dbReference type="eggNOG" id="COG0050">
    <property type="taxonomic scope" value="Bacteria"/>
</dbReference>
<dbReference type="HOGENOM" id="CLU_007265_0_1_3"/>
<dbReference type="OrthoDB" id="9804504at2"/>
<dbReference type="Proteomes" id="UP000002014">
    <property type="component" value="Chromosome"/>
</dbReference>
<dbReference type="GO" id="GO:0005829">
    <property type="term" value="C:cytosol"/>
    <property type="evidence" value="ECO:0007669"/>
    <property type="project" value="TreeGrafter"/>
</dbReference>
<dbReference type="GO" id="GO:0005525">
    <property type="term" value="F:GTP binding"/>
    <property type="evidence" value="ECO:0007669"/>
    <property type="project" value="UniProtKB-UniRule"/>
</dbReference>
<dbReference type="GO" id="GO:0003924">
    <property type="term" value="F:GTPase activity"/>
    <property type="evidence" value="ECO:0007669"/>
    <property type="project" value="InterPro"/>
</dbReference>
<dbReference type="GO" id="GO:0003746">
    <property type="term" value="F:translation elongation factor activity"/>
    <property type="evidence" value="ECO:0007669"/>
    <property type="project" value="UniProtKB-UniRule"/>
</dbReference>
<dbReference type="CDD" id="cd01884">
    <property type="entry name" value="EF_Tu"/>
    <property type="match status" value="1"/>
</dbReference>
<dbReference type="CDD" id="cd03697">
    <property type="entry name" value="EFTU_II"/>
    <property type="match status" value="1"/>
</dbReference>
<dbReference type="CDD" id="cd03707">
    <property type="entry name" value="EFTU_III"/>
    <property type="match status" value="1"/>
</dbReference>
<dbReference type="FunFam" id="2.40.30.10:FF:000001">
    <property type="entry name" value="Elongation factor Tu"/>
    <property type="match status" value="1"/>
</dbReference>
<dbReference type="FunFam" id="2.40.30.10:FF:000046">
    <property type="entry name" value="Elongation factor Tu"/>
    <property type="match status" value="1"/>
</dbReference>
<dbReference type="FunFam" id="3.40.50.300:FF:000003">
    <property type="entry name" value="Elongation factor Tu"/>
    <property type="match status" value="1"/>
</dbReference>
<dbReference type="Gene3D" id="3.40.50.300">
    <property type="entry name" value="P-loop containing nucleotide triphosphate hydrolases"/>
    <property type="match status" value="1"/>
</dbReference>
<dbReference type="Gene3D" id="2.40.30.10">
    <property type="entry name" value="Translation factors"/>
    <property type="match status" value="2"/>
</dbReference>
<dbReference type="HAMAP" id="MF_00118_B">
    <property type="entry name" value="EF_Tu_B"/>
    <property type="match status" value="1"/>
</dbReference>
<dbReference type="InterPro" id="IPR041709">
    <property type="entry name" value="EF-Tu_GTP-bd"/>
</dbReference>
<dbReference type="InterPro" id="IPR050055">
    <property type="entry name" value="EF-Tu_GTPase"/>
</dbReference>
<dbReference type="InterPro" id="IPR004161">
    <property type="entry name" value="EFTu-like_2"/>
</dbReference>
<dbReference type="InterPro" id="IPR033720">
    <property type="entry name" value="EFTU_2"/>
</dbReference>
<dbReference type="InterPro" id="IPR031157">
    <property type="entry name" value="G_TR_CS"/>
</dbReference>
<dbReference type="InterPro" id="IPR027417">
    <property type="entry name" value="P-loop_NTPase"/>
</dbReference>
<dbReference type="InterPro" id="IPR005225">
    <property type="entry name" value="Small_GTP-bd"/>
</dbReference>
<dbReference type="InterPro" id="IPR000795">
    <property type="entry name" value="T_Tr_GTP-bd_dom"/>
</dbReference>
<dbReference type="InterPro" id="IPR009000">
    <property type="entry name" value="Transl_B-barrel_sf"/>
</dbReference>
<dbReference type="InterPro" id="IPR009001">
    <property type="entry name" value="Transl_elong_EF1A/Init_IF2_C"/>
</dbReference>
<dbReference type="InterPro" id="IPR004541">
    <property type="entry name" value="Transl_elong_EFTu/EF1A_bac/org"/>
</dbReference>
<dbReference type="InterPro" id="IPR004160">
    <property type="entry name" value="Transl_elong_EFTu/EF1A_C"/>
</dbReference>
<dbReference type="NCBIfam" id="TIGR00485">
    <property type="entry name" value="EF-Tu"/>
    <property type="match status" value="1"/>
</dbReference>
<dbReference type="NCBIfam" id="NF000766">
    <property type="entry name" value="PRK00049.1"/>
    <property type="match status" value="1"/>
</dbReference>
<dbReference type="NCBIfam" id="NF009372">
    <property type="entry name" value="PRK12735.1"/>
    <property type="match status" value="1"/>
</dbReference>
<dbReference type="NCBIfam" id="NF009373">
    <property type="entry name" value="PRK12736.1"/>
    <property type="match status" value="1"/>
</dbReference>
<dbReference type="NCBIfam" id="TIGR00231">
    <property type="entry name" value="small_GTP"/>
    <property type="match status" value="1"/>
</dbReference>
<dbReference type="PANTHER" id="PTHR43721:SF22">
    <property type="entry name" value="ELONGATION FACTOR TU, MITOCHONDRIAL"/>
    <property type="match status" value="1"/>
</dbReference>
<dbReference type="PANTHER" id="PTHR43721">
    <property type="entry name" value="ELONGATION FACTOR TU-RELATED"/>
    <property type="match status" value="1"/>
</dbReference>
<dbReference type="Pfam" id="PF00009">
    <property type="entry name" value="GTP_EFTU"/>
    <property type="match status" value="1"/>
</dbReference>
<dbReference type="Pfam" id="PF03144">
    <property type="entry name" value="GTP_EFTU_D2"/>
    <property type="match status" value="1"/>
</dbReference>
<dbReference type="Pfam" id="PF03143">
    <property type="entry name" value="GTP_EFTU_D3"/>
    <property type="match status" value="1"/>
</dbReference>
<dbReference type="PRINTS" id="PR00315">
    <property type="entry name" value="ELONGATNFCT"/>
</dbReference>
<dbReference type="SUPFAM" id="SSF50465">
    <property type="entry name" value="EF-Tu/eEF-1alpha/eIF2-gamma C-terminal domain"/>
    <property type="match status" value="1"/>
</dbReference>
<dbReference type="SUPFAM" id="SSF52540">
    <property type="entry name" value="P-loop containing nucleoside triphosphate hydrolases"/>
    <property type="match status" value="1"/>
</dbReference>
<dbReference type="SUPFAM" id="SSF50447">
    <property type="entry name" value="Translation proteins"/>
    <property type="match status" value="1"/>
</dbReference>
<dbReference type="PROSITE" id="PS00301">
    <property type="entry name" value="G_TR_1"/>
    <property type="match status" value="1"/>
</dbReference>
<dbReference type="PROSITE" id="PS51722">
    <property type="entry name" value="G_TR_2"/>
    <property type="match status" value="1"/>
</dbReference>
<feature type="chain" id="PRO_1000057791" description="Elongation factor Tu">
    <location>
        <begin position="1"/>
        <end position="399"/>
    </location>
</feature>
<feature type="domain" description="tr-type G">
    <location>
        <begin position="10"/>
        <end position="204"/>
    </location>
</feature>
<feature type="region of interest" description="G1" evidence="1">
    <location>
        <begin position="19"/>
        <end position="26"/>
    </location>
</feature>
<feature type="region of interest" description="G2" evidence="1">
    <location>
        <begin position="60"/>
        <end position="64"/>
    </location>
</feature>
<feature type="region of interest" description="G3" evidence="1">
    <location>
        <begin position="81"/>
        <end position="84"/>
    </location>
</feature>
<feature type="region of interest" description="G4" evidence="1">
    <location>
        <begin position="136"/>
        <end position="139"/>
    </location>
</feature>
<feature type="region of interest" description="G5" evidence="1">
    <location>
        <begin position="174"/>
        <end position="176"/>
    </location>
</feature>
<feature type="binding site" evidence="2">
    <location>
        <begin position="19"/>
        <end position="26"/>
    </location>
    <ligand>
        <name>GTP</name>
        <dbReference type="ChEBI" id="CHEBI:37565"/>
    </ligand>
</feature>
<feature type="binding site" evidence="2">
    <location>
        <position position="26"/>
    </location>
    <ligand>
        <name>Mg(2+)</name>
        <dbReference type="ChEBI" id="CHEBI:18420"/>
    </ligand>
</feature>
<feature type="binding site" evidence="2">
    <location>
        <begin position="81"/>
        <end position="85"/>
    </location>
    <ligand>
        <name>GTP</name>
        <dbReference type="ChEBI" id="CHEBI:37565"/>
    </ligand>
</feature>
<feature type="binding site" evidence="2">
    <location>
        <begin position="136"/>
        <end position="139"/>
    </location>
    <ligand>
        <name>GTP</name>
        <dbReference type="ChEBI" id="CHEBI:37565"/>
    </ligand>
</feature>
<comment type="function">
    <text evidence="2">GTP hydrolase that promotes the GTP-dependent binding of aminoacyl-tRNA to the A-site of ribosomes during protein biosynthesis.</text>
</comment>
<comment type="catalytic activity">
    <reaction evidence="2">
        <text>GTP + H2O = GDP + phosphate + H(+)</text>
        <dbReference type="Rhea" id="RHEA:19669"/>
        <dbReference type="ChEBI" id="CHEBI:15377"/>
        <dbReference type="ChEBI" id="CHEBI:15378"/>
        <dbReference type="ChEBI" id="CHEBI:37565"/>
        <dbReference type="ChEBI" id="CHEBI:43474"/>
        <dbReference type="ChEBI" id="CHEBI:58189"/>
        <dbReference type="EC" id="3.6.5.3"/>
    </reaction>
    <physiologicalReaction direction="left-to-right" evidence="2">
        <dbReference type="Rhea" id="RHEA:19670"/>
    </physiologicalReaction>
</comment>
<comment type="subunit">
    <text evidence="2">Monomer.</text>
</comment>
<comment type="subcellular location">
    <subcellularLocation>
        <location evidence="2">Cytoplasm</location>
    </subcellularLocation>
</comment>
<comment type="similarity">
    <text evidence="2">Belongs to the TRAFAC class translation factor GTPase superfamily. Classic translation factor GTPase family. EF-Tu/EF-1A subfamily.</text>
</comment>
<accession>A8G708</accession>
<evidence type="ECO:0000250" key="1"/>
<evidence type="ECO:0000255" key="2">
    <source>
        <dbReference type="HAMAP-Rule" id="MF_00118"/>
    </source>
</evidence>